<dbReference type="EC" id="3.5.1.-"/>
<dbReference type="EMBL" id="L42023">
    <property type="protein sequence ID" value="AAC22243.1"/>
    <property type="molecule type" value="Genomic_DNA"/>
</dbReference>
<dbReference type="PIR" id="B64079">
    <property type="entry name" value="B64079"/>
</dbReference>
<dbReference type="RefSeq" id="NP_438742.1">
    <property type="nucleotide sequence ID" value="NC_000907.1"/>
</dbReference>
<dbReference type="SMR" id="P44765"/>
<dbReference type="STRING" id="71421.HI_0584"/>
<dbReference type="EnsemblBacteria" id="AAC22243">
    <property type="protein sequence ID" value="AAC22243"/>
    <property type="gene ID" value="HI_0584"/>
</dbReference>
<dbReference type="KEGG" id="hin:HI_0584"/>
<dbReference type="PATRIC" id="fig|71421.8.peg.605"/>
<dbReference type="eggNOG" id="COG1473">
    <property type="taxonomic scope" value="Bacteria"/>
</dbReference>
<dbReference type="HOGENOM" id="CLU_023257_2_1_6"/>
<dbReference type="OrthoDB" id="9777385at2"/>
<dbReference type="PhylomeDB" id="P44765"/>
<dbReference type="BioCyc" id="HINF71421:G1GJ1-597-MONOMER"/>
<dbReference type="Proteomes" id="UP000000579">
    <property type="component" value="Chromosome"/>
</dbReference>
<dbReference type="GO" id="GO:0005737">
    <property type="term" value="C:cytoplasm"/>
    <property type="evidence" value="ECO:0000318"/>
    <property type="project" value="GO_Central"/>
</dbReference>
<dbReference type="GO" id="GO:0016805">
    <property type="term" value="F:dipeptidase activity"/>
    <property type="evidence" value="ECO:0000318"/>
    <property type="project" value="GO_Central"/>
</dbReference>
<dbReference type="GO" id="GO:0071713">
    <property type="term" value="F:para-aminobenzoyl-glutamate hydrolase activity"/>
    <property type="evidence" value="ECO:0000318"/>
    <property type="project" value="GO_Central"/>
</dbReference>
<dbReference type="GO" id="GO:0046657">
    <property type="term" value="P:folic acid catabolic process"/>
    <property type="evidence" value="ECO:0000318"/>
    <property type="project" value="GO_Central"/>
</dbReference>
<dbReference type="CDD" id="cd05665">
    <property type="entry name" value="M20_Acy1_IAAspH"/>
    <property type="match status" value="1"/>
</dbReference>
<dbReference type="FunFam" id="3.40.630.10:FF:000080">
    <property type="entry name" value="p-aminobenzoyl-glutamate hydrolase subunit A"/>
    <property type="match status" value="1"/>
</dbReference>
<dbReference type="FunFam" id="3.40.630.10:FF:000077">
    <property type="entry name" value="p-aminobenzoyl-glutamate hydrolase, A subunit"/>
    <property type="match status" value="1"/>
</dbReference>
<dbReference type="Gene3D" id="3.40.630.10">
    <property type="entry name" value="Zn peptidases"/>
    <property type="match status" value="2"/>
</dbReference>
<dbReference type="InterPro" id="IPR033845">
    <property type="entry name" value="AbgA"/>
</dbReference>
<dbReference type="InterPro" id="IPR017439">
    <property type="entry name" value="Amidohydrolase"/>
</dbReference>
<dbReference type="InterPro" id="IPR036264">
    <property type="entry name" value="Bact_exopeptidase_dim_dom"/>
</dbReference>
<dbReference type="InterPro" id="IPR002933">
    <property type="entry name" value="Peptidase_M20"/>
</dbReference>
<dbReference type="InterPro" id="IPR052030">
    <property type="entry name" value="Peptidase_M20/M20A_hydrolases"/>
</dbReference>
<dbReference type="InterPro" id="IPR011650">
    <property type="entry name" value="Peptidase_M20_dimer"/>
</dbReference>
<dbReference type="NCBIfam" id="TIGR01891">
    <property type="entry name" value="amidohydrolases"/>
    <property type="match status" value="1"/>
</dbReference>
<dbReference type="PANTHER" id="PTHR30575">
    <property type="entry name" value="PEPTIDASE M20"/>
    <property type="match status" value="1"/>
</dbReference>
<dbReference type="PANTHER" id="PTHR30575:SF3">
    <property type="entry name" value="PEPTIDASE M20 DIMERISATION DOMAIN-CONTAINING PROTEIN"/>
    <property type="match status" value="1"/>
</dbReference>
<dbReference type="Pfam" id="PF07687">
    <property type="entry name" value="M20_dimer"/>
    <property type="match status" value="1"/>
</dbReference>
<dbReference type="Pfam" id="PF01546">
    <property type="entry name" value="Peptidase_M20"/>
    <property type="match status" value="1"/>
</dbReference>
<dbReference type="PIRSF" id="PIRSF005962">
    <property type="entry name" value="Pept_M20D_amidohydro"/>
    <property type="match status" value="1"/>
</dbReference>
<dbReference type="SUPFAM" id="SSF55031">
    <property type="entry name" value="Bacterial exopeptidase dimerisation domain"/>
    <property type="match status" value="1"/>
</dbReference>
<dbReference type="SUPFAM" id="SSF53187">
    <property type="entry name" value="Zn-dependent exopeptidases"/>
    <property type="match status" value="1"/>
</dbReference>
<reference key="1">
    <citation type="journal article" date="1995" name="Science">
        <title>Whole-genome random sequencing and assembly of Haemophilus influenzae Rd.</title>
        <authorList>
            <person name="Fleischmann R.D."/>
            <person name="Adams M.D."/>
            <person name="White O."/>
            <person name="Clayton R.A."/>
            <person name="Kirkness E.F."/>
            <person name="Kerlavage A.R."/>
            <person name="Bult C.J."/>
            <person name="Tomb J.-F."/>
            <person name="Dougherty B.A."/>
            <person name="Merrick J.M."/>
            <person name="McKenney K."/>
            <person name="Sutton G.G."/>
            <person name="FitzHugh W."/>
            <person name="Fields C.A."/>
            <person name="Gocayne J.D."/>
            <person name="Scott J.D."/>
            <person name="Shirley R."/>
            <person name="Liu L.-I."/>
            <person name="Glodek A."/>
            <person name="Kelley J.M."/>
            <person name="Weidman J.F."/>
            <person name="Phillips C.A."/>
            <person name="Spriggs T."/>
            <person name="Hedblom E."/>
            <person name="Cotton M.D."/>
            <person name="Utterback T.R."/>
            <person name="Hanna M.C."/>
            <person name="Nguyen D.T."/>
            <person name="Saudek D.M."/>
            <person name="Brandon R.C."/>
            <person name="Fine L.D."/>
            <person name="Fritchman J.L."/>
            <person name="Fuhrmann J.L."/>
            <person name="Geoghagen N.S.M."/>
            <person name="Gnehm C.L."/>
            <person name="McDonald L.A."/>
            <person name="Small K.V."/>
            <person name="Fraser C.M."/>
            <person name="Smith H.O."/>
            <person name="Venter J.C."/>
        </authorList>
    </citation>
    <scope>NUCLEOTIDE SEQUENCE [LARGE SCALE GENOMIC DNA]</scope>
    <source>
        <strain>ATCC 51907 / DSM 11121 / KW20 / Rd</strain>
    </source>
</reference>
<comment type="function">
    <text evidence="1">Catalyzes the cleavage of p-aminobenzoyl-glutamate (PABA-GLU) to form p-aminobenzoate (PABA) and glutamate.</text>
</comment>
<comment type="cofactor">
    <cofactor evidence="1">
        <name>Mn(2+)</name>
        <dbReference type="ChEBI" id="CHEBI:29035"/>
    </cofactor>
</comment>
<comment type="miscellaneous">
    <text>Unlike E.coli, AbgB is not present in H.influenza and therefore the multicomponent hydrolase AbgAB does not exist in this form.</text>
</comment>
<comment type="similarity">
    <text evidence="2">Belongs to the peptidase M20 family.</text>
</comment>
<organism>
    <name type="scientific">Haemophilus influenzae (strain ATCC 51907 / DSM 11121 / KW20 / Rd)</name>
    <dbReference type="NCBI Taxonomy" id="71421"/>
    <lineage>
        <taxon>Bacteria</taxon>
        <taxon>Pseudomonadati</taxon>
        <taxon>Pseudomonadota</taxon>
        <taxon>Gammaproteobacteria</taxon>
        <taxon>Pasteurellales</taxon>
        <taxon>Pasteurellaceae</taxon>
        <taxon>Haemophilus</taxon>
    </lineage>
</organism>
<name>ABGA_HAEIN</name>
<feature type="chain" id="PRO_0000061959" description="p-aminobenzoyl-glutamate hydrolase subunit A homolog">
    <location>
        <begin position="1"/>
        <end position="423"/>
    </location>
</feature>
<gene>
    <name type="primary">abgA</name>
    <name type="ordered locus">HI_0584</name>
</gene>
<sequence>MNLDLNQLVKWHREFHRFPEIGWSEFWTTSRIADYLEDLDCFEIFLGKQIINPDFVRGRKQAVVDKGLANAKAYGANEKWLEKMEGYTGCVALFDSGKPGKTIALRFDIDCVNVTETRSPEHIPNKEGFASINDGFMHACGHDSHITIGLGVALWIAQNKDKLTGKVKIVFQPAEEGVRGAAAIAQSGIIDDADYFASSHISFCANTGTVIANPRNFLSTTKIDIRYKGKPAHAGAAPHLGRNALLAAAHTVTQLHGIARHGKGMTRINVGVLKAGEGRNVIPSSAELQLEVRGENKAINEYMTEQVMQIAKGISISFNVAYETEIVGEAVDMNNDVELIKLIEEISLEQPQINNVNSDYAFNASEDATILGRRVQEHGGKAIYFILGADRTAGHHEAEFDFDENQLLTGVNIYTSLVQKLLS</sequence>
<protein>
    <recommendedName>
        <fullName>p-aminobenzoyl-glutamate hydrolase subunit A homolog</fullName>
        <ecNumber>3.5.1.-</ecNumber>
    </recommendedName>
    <alternativeName>
        <fullName>PABA-GLU hydrolase</fullName>
        <shortName>PGH</shortName>
    </alternativeName>
</protein>
<proteinExistence type="inferred from homology"/>
<evidence type="ECO:0000250" key="1"/>
<evidence type="ECO:0000305" key="2"/>
<keyword id="KW-0378">Hydrolase</keyword>
<keyword id="KW-1185">Reference proteome</keyword>
<accession>P44765</accession>